<feature type="chain" id="PRO_0000267792" description="Nucleoside diphosphate kinase">
    <location>
        <begin position="1"/>
        <end position="141"/>
    </location>
</feature>
<feature type="active site" description="Pros-phosphohistidine intermediate" evidence="1">
    <location>
        <position position="117"/>
    </location>
</feature>
<feature type="binding site" evidence="1">
    <location>
        <position position="11"/>
    </location>
    <ligand>
        <name>ATP</name>
        <dbReference type="ChEBI" id="CHEBI:30616"/>
    </ligand>
</feature>
<feature type="binding site" evidence="1">
    <location>
        <position position="59"/>
    </location>
    <ligand>
        <name>ATP</name>
        <dbReference type="ChEBI" id="CHEBI:30616"/>
    </ligand>
</feature>
<feature type="binding site" evidence="1">
    <location>
        <position position="87"/>
    </location>
    <ligand>
        <name>ATP</name>
        <dbReference type="ChEBI" id="CHEBI:30616"/>
    </ligand>
</feature>
<feature type="binding site" evidence="1">
    <location>
        <position position="93"/>
    </location>
    <ligand>
        <name>ATP</name>
        <dbReference type="ChEBI" id="CHEBI:30616"/>
    </ligand>
</feature>
<feature type="binding site" evidence="1">
    <location>
        <position position="104"/>
    </location>
    <ligand>
        <name>ATP</name>
        <dbReference type="ChEBI" id="CHEBI:30616"/>
    </ligand>
</feature>
<feature type="binding site" evidence="1">
    <location>
        <position position="114"/>
    </location>
    <ligand>
        <name>ATP</name>
        <dbReference type="ChEBI" id="CHEBI:30616"/>
    </ligand>
</feature>
<protein>
    <recommendedName>
        <fullName evidence="1">Nucleoside diphosphate kinase</fullName>
        <shortName evidence="1">NDK</shortName>
        <shortName evidence="1">NDP kinase</shortName>
        <ecNumber evidence="1">2.7.4.6</ecNumber>
    </recommendedName>
    <alternativeName>
        <fullName evidence="1">Nucleoside-2-P kinase</fullName>
    </alternativeName>
</protein>
<proteinExistence type="inferred from homology"/>
<reference key="1">
    <citation type="journal article" date="2008" name="Appl. Environ. Microbiol.">
        <title>The genome of Polaromonas sp. strain JS666: insights into the evolution of a hydrocarbon- and xenobiotic-degrading bacterium, and features of relevance to biotechnology.</title>
        <authorList>
            <person name="Mattes T.E."/>
            <person name="Alexander A.K."/>
            <person name="Richardson P.M."/>
            <person name="Munk A.C."/>
            <person name="Han C.S."/>
            <person name="Stothard P."/>
            <person name="Coleman N.V."/>
        </authorList>
    </citation>
    <scope>NUCLEOTIDE SEQUENCE [LARGE SCALE GENOMIC DNA]</scope>
    <source>
        <strain>JS666 / ATCC BAA-500</strain>
    </source>
</reference>
<gene>
    <name evidence="1" type="primary">ndk</name>
    <name type="ordered locus">Bpro_2612</name>
</gene>
<dbReference type="EC" id="2.7.4.6" evidence="1"/>
<dbReference type="EMBL" id="CP000316">
    <property type="protein sequence ID" value="ABE44528.1"/>
    <property type="molecule type" value="Genomic_DNA"/>
</dbReference>
<dbReference type="RefSeq" id="WP_011483526.1">
    <property type="nucleotide sequence ID" value="NC_007948.1"/>
</dbReference>
<dbReference type="SMR" id="Q12AB4"/>
<dbReference type="STRING" id="296591.Bpro_2612"/>
<dbReference type="KEGG" id="pol:Bpro_2612"/>
<dbReference type="eggNOG" id="COG0105">
    <property type="taxonomic scope" value="Bacteria"/>
</dbReference>
<dbReference type="HOGENOM" id="CLU_060216_8_1_4"/>
<dbReference type="OrthoDB" id="9801161at2"/>
<dbReference type="Proteomes" id="UP000001983">
    <property type="component" value="Chromosome"/>
</dbReference>
<dbReference type="GO" id="GO:0005737">
    <property type="term" value="C:cytoplasm"/>
    <property type="evidence" value="ECO:0007669"/>
    <property type="project" value="UniProtKB-SubCell"/>
</dbReference>
<dbReference type="GO" id="GO:0005524">
    <property type="term" value="F:ATP binding"/>
    <property type="evidence" value="ECO:0007669"/>
    <property type="project" value="UniProtKB-UniRule"/>
</dbReference>
<dbReference type="GO" id="GO:0046872">
    <property type="term" value="F:metal ion binding"/>
    <property type="evidence" value="ECO:0007669"/>
    <property type="project" value="UniProtKB-KW"/>
</dbReference>
<dbReference type="GO" id="GO:0004550">
    <property type="term" value="F:nucleoside diphosphate kinase activity"/>
    <property type="evidence" value="ECO:0007669"/>
    <property type="project" value="UniProtKB-UniRule"/>
</dbReference>
<dbReference type="GO" id="GO:0006241">
    <property type="term" value="P:CTP biosynthetic process"/>
    <property type="evidence" value="ECO:0007669"/>
    <property type="project" value="UniProtKB-UniRule"/>
</dbReference>
<dbReference type="GO" id="GO:0006183">
    <property type="term" value="P:GTP biosynthetic process"/>
    <property type="evidence" value="ECO:0007669"/>
    <property type="project" value="UniProtKB-UniRule"/>
</dbReference>
<dbReference type="GO" id="GO:0006228">
    <property type="term" value="P:UTP biosynthetic process"/>
    <property type="evidence" value="ECO:0007669"/>
    <property type="project" value="UniProtKB-UniRule"/>
</dbReference>
<dbReference type="CDD" id="cd04413">
    <property type="entry name" value="NDPk_I"/>
    <property type="match status" value="1"/>
</dbReference>
<dbReference type="FunFam" id="3.30.70.141:FF:000001">
    <property type="entry name" value="Nucleoside diphosphate kinase"/>
    <property type="match status" value="1"/>
</dbReference>
<dbReference type="Gene3D" id="3.30.70.141">
    <property type="entry name" value="Nucleoside diphosphate kinase-like domain"/>
    <property type="match status" value="1"/>
</dbReference>
<dbReference type="HAMAP" id="MF_00451">
    <property type="entry name" value="NDP_kinase"/>
    <property type="match status" value="1"/>
</dbReference>
<dbReference type="InterPro" id="IPR034907">
    <property type="entry name" value="NDK-like_dom"/>
</dbReference>
<dbReference type="InterPro" id="IPR036850">
    <property type="entry name" value="NDK-like_dom_sf"/>
</dbReference>
<dbReference type="InterPro" id="IPR001564">
    <property type="entry name" value="Nucleoside_diP_kinase"/>
</dbReference>
<dbReference type="InterPro" id="IPR023005">
    <property type="entry name" value="Nucleoside_diP_kinase_AS"/>
</dbReference>
<dbReference type="NCBIfam" id="NF001908">
    <property type="entry name" value="PRK00668.1"/>
    <property type="match status" value="1"/>
</dbReference>
<dbReference type="PANTHER" id="PTHR46161">
    <property type="entry name" value="NUCLEOSIDE DIPHOSPHATE KINASE"/>
    <property type="match status" value="1"/>
</dbReference>
<dbReference type="PANTHER" id="PTHR46161:SF3">
    <property type="entry name" value="NUCLEOSIDE DIPHOSPHATE KINASE DDB_G0292928-RELATED"/>
    <property type="match status" value="1"/>
</dbReference>
<dbReference type="Pfam" id="PF00334">
    <property type="entry name" value="NDK"/>
    <property type="match status" value="1"/>
</dbReference>
<dbReference type="PRINTS" id="PR01243">
    <property type="entry name" value="NUCDPKINASE"/>
</dbReference>
<dbReference type="SMART" id="SM00562">
    <property type="entry name" value="NDK"/>
    <property type="match status" value="1"/>
</dbReference>
<dbReference type="SUPFAM" id="SSF54919">
    <property type="entry name" value="Nucleoside diphosphate kinase, NDK"/>
    <property type="match status" value="1"/>
</dbReference>
<dbReference type="PROSITE" id="PS00469">
    <property type="entry name" value="NDPK"/>
    <property type="match status" value="1"/>
</dbReference>
<dbReference type="PROSITE" id="PS51374">
    <property type="entry name" value="NDPK_LIKE"/>
    <property type="match status" value="1"/>
</dbReference>
<sequence length="141" mass="15133">MAIERTLSIIKPDAVAKNVIGQIYARFEAAGLKVVAAKMAHLSKGEAEAFYAVHKERPFFKDLVSFMISGPVMIQALEGEGAILKNRDLMGATDPKKAAAGTIRADFADSIDANAVHGSDAVETAQAEIAFFFPGMNIYSR</sequence>
<accession>Q12AB4</accession>
<keyword id="KW-0067">ATP-binding</keyword>
<keyword id="KW-0963">Cytoplasm</keyword>
<keyword id="KW-0418">Kinase</keyword>
<keyword id="KW-0460">Magnesium</keyword>
<keyword id="KW-0479">Metal-binding</keyword>
<keyword id="KW-0546">Nucleotide metabolism</keyword>
<keyword id="KW-0547">Nucleotide-binding</keyword>
<keyword id="KW-0597">Phosphoprotein</keyword>
<keyword id="KW-1185">Reference proteome</keyword>
<keyword id="KW-0808">Transferase</keyword>
<evidence type="ECO:0000255" key="1">
    <source>
        <dbReference type="HAMAP-Rule" id="MF_00451"/>
    </source>
</evidence>
<name>NDK_POLSJ</name>
<comment type="function">
    <text evidence="1">Major role in the synthesis of nucleoside triphosphates other than ATP. The ATP gamma phosphate is transferred to the NDP beta phosphate via a ping-pong mechanism, using a phosphorylated active-site intermediate.</text>
</comment>
<comment type="catalytic activity">
    <reaction evidence="1">
        <text>a 2'-deoxyribonucleoside 5'-diphosphate + ATP = a 2'-deoxyribonucleoside 5'-triphosphate + ADP</text>
        <dbReference type="Rhea" id="RHEA:44640"/>
        <dbReference type="ChEBI" id="CHEBI:30616"/>
        <dbReference type="ChEBI" id="CHEBI:61560"/>
        <dbReference type="ChEBI" id="CHEBI:73316"/>
        <dbReference type="ChEBI" id="CHEBI:456216"/>
        <dbReference type="EC" id="2.7.4.6"/>
    </reaction>
</comment>
<comment type="catalytic activity">
    <reaction evidence="1">
        <text>a ribonucleoside 5'-diphosphate + ATP = a ribonucleoside 5'-triphosphate + ADP</text>
        <dbReference type="Rhea" id="RHEA:18113"/>
        <dbReference type="ChEBI" id="CHEBI:30616"/>
        <dbReference type="ChEBI" id="CHEBI:57930"/>
        <dbReference type="ChEBI" id="CHEBI:61557"/>
        <dbReference type="ChEBI" id="CHEBI:456216"/>
        <dbReference type="EC" id="2.7.4.6"/>
    </reaction>
</comment>
<comment type="cofactor">
    <cofactor evidence="1">
        <name>Mg(2+)</name>
        <dbReference type="ChEBI" id="CHEBI:18420"/>
    </cofactor>
</comment>
<comment type="subunit">
    <text evidence="1">Homotetramer.</text>
</comment>
<comment type="subcellular location">
    <subcellularLocation>
        <location evidence="1">Cytoplasm</location>
    </subcellularLocation>
</comment>
<comment type="similarity">
    <text evidence="1">Belongs to the NDK family.</text>
</comment>
<organism>
    <name type="scientific">Polaromonas sp. (strain JS666 / ATCC BAA-500)</name>
    <dbReference type="NCBI Taxonomy" id="296591"/>
    <lineage>
        <taxon>Bacteria</taxon>
        <taxon>Pseudomonadati</taxon>
        <taxon>Pseudomonadota</taxon>
        <taxon>Betaproteobacteria</taxon>
        <taxon>Burkholderiales</taxon>
        <taxon>Comamonadaceae</taxon>
        <taxon>Polaromonas</taxon>
    </lineage>
</organism>